<feature type="peptide" id="PRO_0000441795" description="Cyclotide psyleio D" evidence="2">
    <location>
        <begin position="1"/>
        <end position="29"/>
    </location>
</feature>
<feature type="disulfide bond" evidence="1">
    <location>
        <begin position="5"/>
        <end position="19"/>
    </location>
</feature>
<feature type="disulfide bond" evidence="1">
    <location>
        <begin position="9"/>
        <end position="21"/>
    </location>
</feature>
<feature type="disulfide bond" evidence="1">
    <location>
        <begin position="14"/>
        <end position="26"/>
    </location>
</feature>
<feature type="cross-link" description="Cyclopeptide (Gly-Asp)" evidence="5">
    <location>
        <begin position="1"/>
        <end position="29"/>
    </location>
</feature>
<feature type="unsure residue" description="L or I" evidence="3">
    <location>
        <position position="2"/>
    </location>
</feature>
<name>CYPLD_PSYLE</name>
<keyword id="KW-0903">Direct protein sequencing</keyword>
<keyword id="KW-1015">Disulfide bond</keyword>
<keyword id="KW-0960">Knottin</keyword>
<keyword id="KW-0611">Plant defense</keyword>
<accession>C0HL30</accession>
<comment type="function">
    <text evidence="1">Probably participates in a plant defense mechanism.</text>
</comment>
<comment type="domain">
    <text evidence="4">The presence of a 'disulfide through disulfide knot' structurally defines this protein as a knottin.</text>
</comment>
<comment type="PTM">
    <text evidence="1 2">This is a cyclic peptide.</text>
</comment>
<comment type="mass spectrometry"/>
<comment type="similarity">
    <text evidence="1">Belongs to the cyclotide family. Moebius subfamily.</text>
</comment>
<comment type="caution">
    <text evidence="1">This peptide is cyclic. The start position was chosen by similarity to Oak1 (kalata B1) for which the DNA sequence is known.</text>
</comment>
<sequence>GLPVCGESCFGGTCNTPGCSCTWPVCTRD</sequence>
<dbReference type="SMR" id="C0HL30"/>
<dbReference type="GO" id="GO:0006952">
    <property type="term" value="P:defense response"/>
    <property type="evidence" value="ECO:0007669"/>
    <property type="project" value="UniProtKB-KW"/>
</dbReference>
<dbReference type="InterPro" id="IPR005535">
    <property type="entry name" value="Cyclotide"/>
</dbReference>
<dbReference type="InterPro" id="IPR012324">
    <property type="entry name" value="Cyclotide_moebius_CS"/>
</dbReference>
<dbReference type="InterPro" id="IPR036146">
    <property type="entry name" value="Cyclotide_sf"/>
</dbReference>
<dbReference type="Pfam" id="PF03784">
    <property type="entry name" value="Cyclotide"/>
    <property type="match status" value="1"/>
</dbReference>
<dbReference type="PIRSF" id="PIRSF037891">
    <property type="entry name" value="Cycloviolacin"/>
    <property type="match status" value="1"/>
</dbReference>
<dbReference type="SUPFAM" id="SSF57038">
    <property type="entry name" value="Cyclotides"/>
    <property type="match status" value="1"/>
</dbReference>
<dbReference type="PROSITE" id="PS51052">
    <property type="entry name" value="CYCLOTIDE"/>
    <property type="match status" value="1"/>
</dbReference>
<dbReference type="PROSITE" id="PS60009">
    <property type="entry name" value="CYCLOTIDE_MOEBIUS"/>
    <property type="match status" value="1"/>
</dbReference>
<evidence type="ECO:0000255" key="1">
    <source>
        <dbReference type="PROSITE-ProRule" id="PRU00395"/>
    </source>
</evidence>
<evidence type="ECO:0000269" key="2">
    <source>
    </source>
</evidence>
<evidence type="ECO:0000303" key="3">
    <source>
    </source>
</evidence>
<evidence type="ECO:0000305" key="4"/>
<evidence type="ECO:0000305" key="5">
    <source>
    </source>
</evidence>
<proteinExistence type="evidence at protein level"/>
<reference evidence="4" key="1">
    <citation type="journal article" date="2016" name="J. Nat. Prod.">
        <title>Isolation and Characterization of Cyclotides from Brazilian Psychotria: Significance in Plant Defense and Co-occurrence with Antioxidant Alkaloids.</title>
        <authorList>
            <person name="Matsuura H.N."/>
            <person name="Poth A.G."/>
            <person name="Yendo A.C."/>
            <person name="Fett-Neto A.G."/>
            <person name="Craik D.J."/>
        </authorList>
    </citation>
    <scope>PROTEIN SEQUENCE</scope>
    <scope>MASS SPECTROMETRY</scope>
    <scope>IDENTIFICATION BY MASS SPECTROMETRY</scope>
    <scope>CYCLIZATION</scope>
    <source>
        <tissue evidence="3">Leaf</tissue>
    </source>
</reference>
<organism>
    <name type="scientific">Psychotria leiocarpa</name>
    <dbReference type="NCBI Taxonomy" id="2022332"/>
    <lineage>
        <taxon>Eukaryota</taxon>
        <taxon>Viridiplantae</taxon>
        <taxon>Streptophyta</taxon>
        <taxon>Embryophyta</taxon>
        <taxon>Tracheophyta</taxon>
        <taxon>Spermatophyta</taxon>
        <taxon>Magnoliopsida</taxon>
        <taxon>eudicotyledons</taxon>
        <taxon>Gunneridae</taxon>
        <taxon>Pentapetalae</taxon>
        <taxon>asterids</taxon>
        <taxon>lamiids</taxon>
        <taxon>Gentianales</taxon>
        <taxon>Rubiaceae</taxon>
        <taxon>Rubioideae</taxon>
        <taxon>Psychotrieae</taxon>
        <taxon>Psychotria</taxon>
    </lineage>
</organism>
<protein>
    <recommendedName>
        <fullName evidence="3">Cyclotide psyleio D</fullName>
    </recommendedName>
</protein>